<reference key="1">
    <citation type="submission" date="1997-03" db="EMBL/GenBank/DDBJ databases">
        <title>A 148 kbp sequence of the region between 35 and 47 degree of the Bacillus subtilis genome.</title>
        <authorList>
            <person name="Kasahara Y."/>
            <person name="Nakai S."/>
            <person name="Lee S."/>
            <person name="Sadaie Y."/>
            <person name="Ogasawara N."/>
        </authorList>
    </citation>
    <scope>NUCLEOTIDE SEQUENCE [GENOMIC DNA]</scope>
    <source>
        <strain>168</strain>
    </source>
</reference>
<reference key="2">
    <citation type="journal article" date="1997" name="Nature">
        <title>The complete genome sequence of the Gram-positive bacterium Bacillus subtilis.</title>
        <authorList>
            <person name="Kunst F."/>
            <person name="Ogasawara N."/>
            <person name="Moszer I."/>
            <person name="Albertini A.M."/>
            <person name="Alloni G."/>
            <person name="Azevedo V."/>
            <person name="Bertero M.G."/>
            <person name="Bessieres P."/>
            <person name="Bolotin A."/>
            <person name="Borchert S."/>
            <person name="Borriss R."/>
            <person name="Boursier L."/>
            <person name="Brans A."/>
            <person name="Braun M."/>
            <person name="Brignell S.C."/>
            <person name="Bron S."/>
            <person name="Brouillet S."/>
            <person name="Bruschi C.V."/>
            <person name="Caldwell B."/>
            <person name="Capuano V."/>
            <person name="Carter N.M."/>
            <person name="Choi S.-K."/>
            <person name="Codani J.-J."/>
            <person name="Connerton I.F."/>
            <person name="Cummings N.J."/>
            <person name="Daniel R.A."/>
            <person name="Denizot F."/>
            <person name="Devine K.M."/>
            <person name="Duesterhoeft A."/>
            <person name="Ehrlich S.D."/>
            <person name="Emmerson P.T."/>
            <person name="Entian K.-D."/>
            <person name="Errington J."/>
            <person name="Fabret C."/>
            <person name="Ferrari E."/>
            <person name="Foulger D."/>
            <person name="Fritz C."/>
            <person name="Fujita M."/>
            <person name="Fujita Y."/>
            <person name="Fuma S."/>
            <person name="Galizzi A."/>
            <person name="Galleron N."/>
            <person name="Ghim S.-Y."/>
            <person name="Glaser P."/>
            <person name="Goffeau A."/>
            <person name="Golightly E.J."/>
            <person name="Grandi G."/>
            <person name="Guiseppi G."/>
            <person name="Guy B.J."/>
            <person name="Haga K."/>
            <person name="Haiech J."/>
            <person name="Harwood C.R."/>
            <person name="Henaut A."/>
            <person name="Hilbert H."/>
            <person name="Holsappel S."/>
            <person name="Hosono S."/>
            <person name="Hullo M.-F."/>
            <person name="Itaya M."/>
            <person name="Jones L.-M."/>
            <person name="Joris B."/>
            <person name="Karamata D."/>
            <person name="Kasahara Y."/>
            <person name="Klaerr-Blanchard M."/>
            <person name="Klein C."/>
            <person name="Kobayashi Y."/>
            <person name="Koetter P."/>
            <person name="Koningstein G."/>
            <person name="Krogh S."/>
            <person name="Kumano M."/>
            <person name="Kurita K."/>
            <person name="Lapidus A."/>
            <person name="Lardinois S."/>
            <person name="Lauber J."/>
            <person name="Lazarevic V."/>
            <person name="Lee S.-M."/>
            <person name="Levine A."/>
            <person name="Liu H."/>
            <person name="Masuda S."/>
            <person name="Mauel C."/>
            <person name="Medigue C."/>
            <person name="Medina N."/>
            <person name="Mellado R.P."/>
            <person name="Mizuno M."/>
            <person name="Moestl D."/>
            <person name="Nakai S."/>
            <person name="Noback M."/>
            <person name="Noone D."/>
            <person name="O'Reilly M."/>
            <person name="Ogawa K."/>
            <person name="Ogiwara A."/>
            <person name="Oudega B."/>
            <person name="Park S.-H."/>
            <person name="Parro V."/>
            <person name="Pohl T.M."/>
            <person name="Portetelle D."/>
            <person name="Porwollik S."/>
            <person name="Prescott A.M."/>
            <person name="Presecan E."/>
            <person name="Pujic P."/>
            <person name="Purnelle B."/>
            <person name="Rapoport G."/>
            <person name="Rey M."/>
            <person name="Reynolds S."/>
            <person name="Rieger M."/>
            <person name="Rivolta C."/>
            <person name="Rocha E."/>
            <person name="Roche B."/>
            <person name="Rose M."/>
            <person name="Sadaie Y."/>
            <person name="Sato T."/>
            <person name="Scanlan E."/>
            <person name="Schleich S."/>
            <person name="Schroeter R."/>
            <person name="Scoffone F."/>
            <person name="Sekiguchi J."/>
            <person name="Sekowska A."/>
            <person name="Seror S.J."/>
            <person name="Serror P."/>
            <person name="Shin B.-S."/>
            <person name="Soldo B."/>
            <person name="Sorokin A."/>
            <person name="Tacconi E."/>
            <person name="Takagi T."/>
            <person name="Takahashi H."/>
            <person name="Takemaru K."/>
            <person name="Takeuchi M."/>
            <person name="Tamakoshi A."/>
            <person name="Tanaka T."/>
            <person name="Terpstra P."/>
            <person name="Tognoni A."/>
            <person name="Tosato V."/>
            <person name="Uchiyama S."/>
            <person name="Vandenbol M."/>
            <person name="Vannier F."/>
            <person name="Vassarotti A."/>
            <person name="Viari A."/>
            <person name="Wambutt R."/>
            <person name="Wedler E."/>
            <person name="Wedler H."/>
            <person name="Weitzenegger T."/>
            <person name="Winters P."/>
            <person name="Wipat A."/>
            <person name="Yamamoto H."/>
            <person name="Yamane K."/>
            <person name="Yasumoto K."/>
            <person name="Yata K."/>
            <person name="Yoshida K."/>
            <person name="Yoshikawa H.-F."/>
            <person name="Zumstein E."/>
            <person name="Yoshikawa H."/>
            <person name="Danchin A."/>
        </authorList>
    </citation>
    <scope>NUCLEOTIDE SEQUENCE [LARGE SCALE GENOMIC DNA]</scope>
    <source>
        <strain>168</strain>
    </source>
</reference>
<accession>O31488</accession>
<accession>P96588</accession>
<organism>
    <name type="scientific">Bacillus subtilis (strain 168)</name>
    <dbReference type="NCBI Taxonomy" id="224308"/>
    <lineage>
        <taxon>Bacteria</taxon>
        <taxon>Bacillati</taxon>
        <taxon>Bacillota</taxon>
        <taxon>Bacilli</taxon>
        <taxon>Bacillales</taxon>
        <taxon>Bacillaceae</taxon>
        <taxon>Bacillus</taxon>
    </lineage>
</organism>
<keyword id="KW-1003">Cell membrane</keyword>
<keyword id="KW-0472">Membrane</keyword>
<keyword id="KW-1185">Reference proteome</keyword>
<keyword id="KW-0732">Signal</keyword>
<keyword id="KW-0812">Transmembrane</keyword>
<keyword id="KW-1133">Transmembrane helix</keyword>
<comment type="subcellular location">
    <subcellularLocation>
        <location evidence="2">Cell membrane</location>
        <topology evidence="2">Single-pass membrane protein</topology>
    </subcellularLocation>
</comment>
<comment type="sequence caution" evidence="2">
    <conflict type="erroneous initiation">
        <sequence resource="EMBL-CDS" id="BAA19268"/>
    </conflict>
</comment>
<gene>
    <name type="primary">ydaN</name>
    <name type="ordered locus">BSU04310</name>
</gene>
<feature type="signal peptide" evidence="1">
    <location>
        <begin position="1"/>
        <end position="23"/>
    </location>
</feature>
<feature type="chain" id="PRO_0000369118" description="Uncharacterized protein YdaN">
    <location>
        <begin position="24"/>
        <end position="703"/>
    </location>
</feature>
<feature type="transmembrane region" description="Helical" evidence="1">
    <location>
        <begin position="673"/>
        <end position="693"/>
    </location>
</feature>
<proteinExistence type="inferred from homology"/>
<name>YDAN_BACSU</name>
<sequence>MKQIMIFLTSFMLLAMTGQTALAKDVQVSGSLLGKSSQEQAKQQVLTSELITLYGSKDSAELTYQIPAGASSGNQQLVIEYEASNLLISPSSLTVVIDDEPVKTLKLDGDSKRKTVKLNLNKSQSAQGYHNVSLKFYGVMKEGVCVRQDTSGNWIKIYPDSRLTLADSSEAKGTSLDHYPYPFAQSGNTAEETAIVIPDNPSSAEIEAAVKTEGYLKTVDSSVSIAYVTESELKKIDKPTIVIGVDKHWNGKVKKLLKQAGLQAKGENLLLAERVLKAEGKQQPVLFAQAASEDALTKKISVMTDQTYTGQLSGDTLSISKLQQTEKKESDKLTLENFGAGDITIGADKTSSAHYFYPASAVLDENQSAKLSLKLKKSETIQASTAENESASQAAELKVMINGQPHSVRLDELGKEDKNGFYHVTVKVDPKLLQKNRYIDIQFVTTGLKENNPCNTTDEEKWVFIDKNSTLSYAIKGMSPSADFQEWPLPYAGNQDQTTLIVLPDTVSQSKLEELSLVTESFGNEAQHSYTVKKSSDVTANDAKGRNLIFIGGINQFSLLKEKSSDLLVPQEKNGSFDVSSFEMLNETTKQVVFTQASVWDSRYTMAVFAPSKGDGTAVTKEIISYLNSNDESATVLNETNSQQVFTNHQQLKSETNSSDAEQPTQDHSQKWMYIGVLALIMVVAAVFIWIAVRRKKRKTDTE</sequence>
<evidence type="ECO:0000255" key="1"/>
<evidence type="ECO:0000305" key="2"/>
<dbReference type="EMBL" id="AB001488">
    <property type="protein sequence ID" value="BAA19268.1"/>
    <property type="status" value="ALT_INIT"/>
    <property type="molecule type" value="Genomic_DNA"/>
</dbReference>
<dbReference type="EMBL" id="AL009126">
    <property type="protein sequence ID" value="CAB12238.1"/>
    <property type="molecule type" value="Genomic_DNA"/>
</dbReference>
<dbReference type="PIR" id="E69769">
    <property type="entry name" value="E69769"/>
</dbReference>
<dbReference type="RefSeq" id="NP_388312.1">
    <property type="nucleotide sequence ID" value="NC_000964.3"/>
</dbReference>
<dbReference type="RefSeq" id="WP_003246598.1">
    <property type="nucleotide sequence ID" value="NZ_OZ025638.1"/>
</dbReference>
<dbReference type="SMR" id="O31488"/>
<dbReference type="FunCoup" id="O31488">
    <property type="interactions" value="141"/>
</dbReference>
<dbReference type="IntAct" id="O31488">
    <property type="interactions" value="1"/>
</dbReference>
<dbReference type="STRING" id="224308.BSU04310"/>
<dbReference type="PaxDb" id="224308-BSU04310"/>
<dbReference type="EnsemblBacteria" id="CAB12238">
    <property type="protein sequence ID" value="CAB12238"/>
    <property type="gene ID" value="BSU_04310"/>
</dbReference>
<dbReference type="GeneID" id="940004"/>
<dbReference type="KEGG" id="bsu:BSU04310"/>
<dbReference type="PATRIC" id="fig|224308.179.peg.457"/>
<dbReference type="eggNOG" id="ENOG502Z7S8">
    <property type="taxonomic scope" value="Bacteria"/>
</dbReference>
<dbReference type="InParanoid" id="O31488"/>
<dbReference type="OrthoDB" id="2440594at2"/>
<dbReference type="BioCyc" id="BSUB:BSU04310-MONOMER"/>
<dbReference type="Proteomes" id="UP000001570">
    <property type="component" value="Chromosome"/>
</dbReference>
<dbReference type="GO" id="GO:0005886">
    <property type="term" value="C:plasma membrane"/>
    <property type="evidence" value="ECO:0000318"/>
    <property type="project" value="GO_Central"/>
</dbReference>
<dbReference type="GO" id="GO:0006011">
    <property type="term" value="P:UDP-alpha-D-glucose metabolic process"/>
    <property type="evidence" value="ECO:0007669"/>
    <property type="project" value="InterPro"/>
</dbReference>
<dbReference type="Gene3D" id="2.60.120.260">
    <property type="entry name" value="Galactose-binding domain-like"/>
    <property type="match status" value="2"/>
</dbReference>
<dbReference type="InterPro" id="IPR018513">
    <property type="entry name" value="Cell_synthase_bac"/>
</dbReference>
<dbReference type="PANTHER" id="PTHR39083">
    <property type="entry name" value="CYCLIC DI-GMP-BINDING PROTEIN"/>
    <property type="match status" value="1"/>
</dbReference>
<dbReference type="PANTHER" id="PTHR39083:SF1">
    <property type="entry name" value="CYCLIC DI-GMP-BINDING PROTEIN"/>
    <property type="match status" value="1"/>
</dbReference>
<dbReference type="Pfam" id="PF03170">
    <property type="entry name" value="BcsB"/>
    <property type="match status" value="2"/>
</dbReference>
<protein>
    <recommendedName>
        <fullName>Uncharacterized protein YdaN</fullName>
    </recommendedName>
</protein>